<organism>
    <name type="scientific">Yersinia pseudotuberculosis serotype IB (strain PB1/+)</name>
    <dbReference type="NCBI Taxonomy" id="502801"/>
    <lineage>
        <taxon>Bacteria</taxon>
        <taxon>Pseudomonadati</taxon>
        <taxon>Pseudomonadota</taxon>
        <taxon>Gammaproteobacteria</taxon>
        <taxon>Enterobacterales</taxon>
        <taxon>Yersiniaceae</taxon>
        <taxon>Yersinia</taxon>
    </lineage>
</organism>
<sequence>MQWLADYWWIILILLVGMILNGIKELRRLDHKRFLDNKPELPPHRDNNAQWDDEDDWPDQNKKK</sequence>
<dbReference type="EMBL" id="CP001048">
    <property type="protein sequence ID" value="ACC89838.1"/>
    <property type="molecule type" value="Genomic_DNA"/>
</dbReference>
<dbReference type="RefSeq" id="WP_002208551.1">
    <property type="nucleotide sequence ID" value="NZ_CP009780.1"/>
</dbReference>
<dbReference type="SMR" id="B2K987"/>
<dbReference type="KEGG" id="ypb:YPTS_2881"/>
<dbReference type="PATRIC" id="fig|502801.10.peg.2311"/>
<dbReference type="GO" id="GO:0005886">
    <property type="term" value="C:plasma membrane"/>
    <property type="evidence" value="ECO:0007669"/>
    <property type="project" value="UniProtKB-SubCell"/>
</dbReference>
<dbReference type="HAMAP" id="MF_01566">
    <property type="entry name" value="UPF0370"/>
    <property type="match status" value="1"/>
</dbReference>
<dbReference type="InterPro" id="IPR020910">
    <property type="entry name" value="UPF0370"/>
</dbReference>
<dbReference type="NCBIfam" id="NF010185">
    <property type="entry name" value="PRK13664.1"/>
    <property type="match status" value="1"/>
</dbReference>
<dbReference type="Pfam" id="PF13980">
    <property type="entry name" value="UPF0370"/>
    <property type="match status" value="1"/>
</dbReference>
<proteinExistence type="inferred from homology"/>
<gene>
    <name type="ordered locus">YPTS_2881</name>
</gene>
<feature type="chain" id="PRO_1000199737" description="UPF0370 protein YPTS_2881">
    <location>
        <begin position="1"/>
        <end position="64"/>
    </location>
</feature>
<feature type="transmembrane region" description="Helical" evidence="1">
    <location>
        <begin position="3"/>
        <end position="23"/>
    </location>
</feature>
<feature type="region of interest" description="Disordered" evidence="2">
    <location>
        <begin position="36"/>
        <end position="64"/>
    </location>
</feature>
<feature type="compositionally biased region" description="Basic and acidic residues" evidence="2">
    <location>
        <begin position="36"/>
        <end position="47"/>
    </location>
</feature>
<keyword id="KW-1003">Cell membrane</keyword>
<keyword id="KW-0472">Membrane</keyword>
<keyword id="KW-0812">Transmembrane</keyword>
<keyword id="KW-1133">Transmembrane helix</keyword>
<comment type="subcellular location">
    <subcellularLocation>
        <location evidence="1">Cell membrane</location>
        <topology evidence="1">Single-pass membrane protein</topology>
    </subcellularLocation>
</comment>
<comment type="similarity">
    <text evidence="1">Belongs to the UPF0370 family.</text>
</comment>
<accession>B2K987</accession>
<protein>
    <recommendedName>
        <fullName evidence="1">UPF0370 protein YPTS_2881</fullName>
    </recommendedName>
</protein>
<evidence type="ECO:0000255" key="1">
    <source>
        <dbReference type="HAMAP-Rule" id="MF_01566"/>
    </source>
</evidence>
<evidence type="ECO:0000256" key="2">
    <source>
        <dbReference type="SAM" id="MobiDB-lite"/>
    </source>
</evidence>
<reference key="1">
    <citation type="submission" date="2008-04" db="EMBL/GenBank/DDBJ databases">
        <title>Complete sequence of Yersinia pseudotuberculosis PB1/+.</title>
        <authorList>
            <person name="Copeland A."/>
            <person name="Lucas S."/>
            <person name="Lapidus A."/>
            <person name="Glavina del Rio T."/>
            <person name="Dalin E."/>
            <person name="Tice H."/>
            <person name="Bruce D."/>
            <person name="Goodwin L."/>
            <person name="Pitluck S."/>
            <person name="Munk A.C."/>
            <person name="Brettin T."/>
            <person name="Detter J.C."/>
            <person name="Han C."/>
            <person name="Tapia R."/>
            <person name="Schmutz J."/>
            <person name="Larimer F."/>
            <person name="Land M."/>
            <person name="Hauser L."/>
            <person name="Challacombe J.F."/>
            <person name="Green L."/>
            <person name="Lindler L.E."/>
            <person name="Nikolich M.P."/>
            <person name="Richardson P."/>
        </authorList>
    </citation>
    <scope>NUCLEOTIDE SEQUENCE [LARGE SCALE GENOMIC DNA]</scope>
    <source>
        <strain>PB1/+</strain>
    </source>
</reference>
<name>Y2881_YERPB</name>